<gene>
    <name evidence="1" type="primary">proS</name>
    <name type="ordered locus">ESA_03144</name>
</gene>
<organism>
    <name type="scientific">Cronobacter sakazakii (strain ATCC BAA-894)</name>
    <name type="common">Enterobacter sakazakii</name>
    <dbReference type="NCBI Taxonomy" id="290339"/>
    <lineage>
        <taxon>Bacteria</taxon>
        <taxon>Pseudomonadati</taxon>
        <taxon>Pseudomonadota</taxon>
        <taxon>Gammaproteobacteria</taxon>
        <taxon>Enterobacterales</taxon>
        <taxon>Enterobacteriaceae</taxon>
        <taxon>Cronobacter</taxon>
    </lineage>
</organism>
<name>SYP_CROS8</name>
<keyword id="KW-0030">Aminoacyl-tRNA synthetase</keyword>
<keyword id="KW-0067">ATP-binding</keyword>
<keyword id="KW-0963">Cytoplasm</keyword>
<keyword id="KW-0436">Ligase</keyword>
<keyword id="KW-0547">Nucleotide-binding</keyword>
<keyword id="KW-0648">Protein biosynthesis</keyword>
<keyword id="KW-1185">Reference proteome</keyword>
<sequence>MRTSQYLLSTLKETPADAEVISHQLMLRAGMIRKLASGLYTWLPTGLRVLKKVENIVREEMNNAGAIEVSMPVVQPAELWQESGRWEQYGPELLRFVDRGDRAFVLGPTHEEVITDLIRNELSSYKQLPLNFYQIQTKFRDEVRPRFGVMRSREFLMKDAYSFHTTQESLQQTYDAMYEAYSKIFTRMGLDFRPVQADTGSIGGSASHEFQVLAQSGEDDIVFSDTSDFAANIELAEAVAPLTPRAAATQEMTLVDTPNAKTIAELVEQFNLPIEKTVKTLLVKAAEGSEFPLVALLVRGDHELNEVKAEKLAQVASPLTFATEAEIRAAVNAGPGSLGPVNMPVPVVIDRSVAAMSDFAAGANIDGKHYFGINWDRDVATPQVADIRNVVAGDPSPDGQGTLLIKRGIEVGHIFQLGTKYSDALKASVQGEDGRNQVLTMGCYGIGVTRVVAAAIEQNHDERGIVWPDAIAPFQVAILPMNMHKSFRVQELAEKLYAELRAKGIDVLMDDRKERPGVMFADMELIGIPHTVVIGDRNLDNDEIEYKYRRDGEKKMIKTGDILDYLVANVKR</sequence>
<protein>
    <recommendedName>
        <fullName evidence="1">Proline--tRNA ligase</fullName>
        <ecNumber evidence="1">6.1.1.15</ecNumber>
    </recommendedName>
    <alternativeName>
        <fullName evidence="1">Prolyl-tRNA synthetase</fullName>
        <shortName evidence="1">ProRS</shortName>
    </alternativeName>
</protein>
<proteinExistence type="inferred from homology"/>
<accession>A7MI22</accession>
<evidence type="ECO:0000255" key="1">
    <source>
        <dbReference type="HAMAP-Rule" id="MF_01569"/>
    </source>
</evidence>
<dbReference type="EC" id="6.1.1.15" evidence="1"/>
<dbReference type="EMBL" id="CP000783">
    <property type="protein sequence ID" value="ABU78367.1"/>
    <property type="molecule type" value="Genomic_DNA"/>
</dbReference>
<dbReference type="RefSeq" id="WP_012125699.1">
    <property type="nucleotide sequence ID" value="NC_009778.1"/>
</dbReference>
<dbReference type="SMR" id="A7MI22"/>
<dbReference type="KEGG" id="esa:ESA_03144"/>
<dbReference type="PATRIC" id="fig|290339.8.peg.2776"/>
<dbReference type="HOGENOM" id="CLU_016739_0_0_6"/>
<dbReference type="Proteomes" id="UP000000260">
    <property type="component" value="Chromosome"/>
</dbReference>
<dbReference type="GO" id="GO:0005829">
    <property type="term" value="C:cytosol"/>
    <property type="evidence" value="ECO:0007669"/>
    <property type="project" value="TreeGrafter"/>
</dbReference>
<dbReference type="GO" id="GO:0002161">
    <property type="term" value="F:aminoacyl-tRNA deacylase activity"/>
    <property type="evidence" value="ECO:0007669"/>
    <property type="project" value="InterPro"/>
</dbReference>
<dbReference type="GO" id="GO:0005524">
    <property type="term" value="F:ATP binding"/>
    <property type="evidence" value="ECO:0007669"/>
    <property type="project" value="UniProtKB-UniRule"/>
</dbReference>
<dbReference type="GO" id="GO:0004827">
    <property type="term" value="F:proline-tRNA ligase activity"/>
    <property type="evidence" value="ECO:0007669"/>
    <property type="project" value="UniProtKB-UniRule"/>
</dbReference>
<dbReference type="GO" id="GO:0006433">
    <property type="term" value="P:prolyl-tRNA aminoacylation"/>
    <property type="evidence" value="ECO:0007669"/>
    <property type="project" value="UniProtKB-UniRule"/>
</dbReference>
<dbReference type="CDD" id="cd04334">
    <property type="entry name" value="ProRS-INS"/>
    <property type="match status" value="1"/>
</dbReference>
<dbReference type="CDD" id="cd00861">
    <property type="entry name" value="ProRS_anticodon_short"/>
    <property type="match status" value="1"/>
</dbReference>
<dbReference type="CDD" id="cd00779">
    <property type="entry name" value="ProRS_core_prok"/>
    <property type="match status" value="1"/>
</dbReference>
<dbReference type="FunFam" id="3.30.930.10:FF:000043">
    <property type="entry name" value="Proline--tRNA ligase"/>
    <property type="match status" value="1"/>
</dbReference>
<dbReference type="FunFam" id="3.30.930.10:FF:000097">
    <property type="entry name" value="Proline--tRNA ligase"/>
    <property type="match status" value="1"/>
</dbReference>
<dbReference type="FunFam" id="3.40.50.800:FF:000006">
    <property type="entry name" value="Proline--tRNA ligase"/>
    <property type="match status" value="1"/>
</dbReference>
<dbReference type="FunFam" id="3.90.960.10:FF:000001">
    <property type="entry name" value="Proline--tRNA ligase"/>
    <property type="match status" value="1"/>
</dbReference>
<dbReference type="Gene3D" id="3.40.50.800">
    <property type="entry name" value="Anticodon-binding domain"/>
    <property type="match status" value="1"/>
</dbReference>
<dbReference type="Gene3D" id="3.30.930.10">
    <property type="entry name" value="Bira Bifunctional Protein, Domain 2"/>
    <property type="match status" value="2"/>
</dbReference>
<dbReference type="Gene3D" id="3.90.960.10">
    <property type="entry name" value="YbaK/aminoacyl-tRNA synthetase-associated domain"/>
    <property type="match status" value="1"/>
</dbReference>
<dbReference type="HAMAP" id="MF_01569">
    <property type="entry name" value="Pro_tRNA_synth_type1"/>
    <property type="match status" value="1"/>
</dbReference>
<dbReference type="InterPro" id="IPR002314">
    <property type="entry name" value="aa-tRNA-synt_IIb"/>
</dbReference>
<dbReference type="InterPro" id="IPR006195">
    <property type="entry name" value="aa-tRNA-synth_II"/>
</dbReference>
<dbReference type="InterPro" id="IPR045864">
    <property type="entry name" value="aa-tRNA-synth_II/BPL/LPL"/>
</dbReference>
<dbReference type="InterPro" id="IPR004154">
    <property type="entry name" value="Anticodon-bd"/>
</dbReference>
<dbReference type="InterPro" id="IPR036621">
    <property type="entry name" value="Anticodon-bd_dom_sf"/>
</dbReference>
<dbReference type="InterPro" id="IPR002316">
    <property type="entry name" value="Pro-tRNA-ligase_IIa"/>
</dbReference>
<dbReference type="InterPro" id="IPR004500">
    <property type="entry name" value="Pro-tRNA-synth_IIa_bac-type"/>
</dbReference>
<dbReference type="InterPro" id="IPR023717">
    <property type="entry name" value="Pro-tRNA-Synthase_IIa_type1"/>
</dbReference>
<dbReference type="InterPro" id="IPR050062">
    <property type="entry name" value="Pro-tRNA_synthetase"/>
</dbReference>
<dbReference type="InterPro" id="IPR044140">
    <property type="entry name" value="ProRS_anticodon_short"/>
</dbReference>
<dbReference type="InterPro" id="IPR033730">
    <property type="entry name" value="ProRS_core_prok"/>
</dbReference>
<dbReference type="InterPro" id="IPR036754">
    <property type="entry name" value="YbaK/aa-tRNA-synt-asso_dom_sf"/>
</dbReference>
<dbReference type="InterPro" id="IPR007214">
    <property type="entry name" value="YbaK/aa-tRNA-synth-assoc-dom"/>
</dbReference>
<dbReference type="NCBIfam" id="NF006625">
    <property type="entry name" value="PRK09194.1"/>
    <property type="match status" value="1"/>
</dbReference>
<dbReference type="NCBIfam" id="TIGR00409">
    <property type="entry name" value="proS_fam_II"/>
    <property type="match status" value="1"/>
</dbReference>
<dbReference type="PANTHER" id="PTHR42753">
    <property type="entry name" value="MITOCHONDRIAL RIBOSOME PROTEIN L39/PROLYL-TRNA LIGASE FAMILY MEMBER"/>
    <property type="match status" value="1"/>
</dbReference>
<dbReference type="PANTHER" id="PTHR42753:SF2">
    <property type="entry name" value="PROLINE--TRNA LIGASE"/>
    <property type="match status" value="1"/>
</dbReference>
<dbReference type="Pfam" id="PF03129">
    <property type="entry name" value="HGTP_anticodon"/>
    <property type="match status" value="1"/>
</dbReference>
<dbReference type="Pfam" id="PF00587">
    <property type="entry name" value="tRNA-synt_2b"/>
    <property type="match status" value="1"/>
</dbReference>
<dbReference type="Pfam" id="PF04073">
    <property type="entry name" value="tRNA_edit"/>
    <property type="match status" value="1"/>
</dbReference>
<dbReference type="PIRSF" id="PIRSF001535">
    <property type="entry name" value="ProRS_1"/>
    <property type="match status" value="1"/>
</dbReference>
<dbReference type="PRINTS" id="PR01046">
    <property type="entry name" value="TRNASYNTHPRO"/>
</dbReference>
<dbReference type="SUPFAM" id="SSF52954">
    <property type="entry name" value="Class II aaRS ABD-related"/>
    <property type="match status" value="1"/>
</dbReference>
<dbReference type="SUPFAM" id="SSF55681">
    <property type="entry name" value="Class II aaRS and biotin synthetases"/>
    <property type="match status" value="1"/>
</dbReference>
<dbReference type="SUPFAM" id="SSF55826">
    <property type="entry name" value="YbaK/ProRS associated domain"/>
    <property type="match status" value="1"/>
</dbReference>
<dbReference type="PROSITE" id="PS50862">
    <property type="entry name" value="AA_TRNA_LIGASE_II"/>
    <property type="match status" value="1"/>
</dbReference>
<comment type="function">
    <text evidence="1">Catalyzes the attachment of proline to tRNA(Pro) in a two-step reaction: proline is first activated by ATP to form Pro-AMP and then transferred to the acceptor end of tRNA(Pro). As ProRS can inadvertently accommodate and process non-cognate amino acids such as alanine and cysteine, to avoid such errors it has two additional distinct editing activities against alanine. One activity is designated as 'pretransfer' editing and involves the tRNA(Pro)-independent hydrolysis of activated Ala-AMP. The other activity is designated 'posttransfer' editing and involves deacylation of mischarged Ala-tRNA(Pro). The misacylated Cys-tRNA(Pro) is not edited by ProRS.</text>
</comment>
<comment type="catalytic activity">
    <reaction evidence="1">
        <text>tRNA(Pro) + L-proline + ATP = L-prolyl-tRNA(Pro) + AMP + diphosphate</text>
        <dbReference type="Rhea" id="RHEA:14305"/>
        <dbReference type="Rhea" id="RHEA-COMP:9700"/>
        <dbReference type="Rhea" id="RHEA-COMP:9702"/>
        <dbReference type="ChEBI" id="CHEBI:30616"/>
        <dbReference type="ChEBI" id="CHEBI:33019"/>
        <dbReference type="ChEBI" id="CHEBI:60039"/>
        <dbReference type="ChEBI" id="CHEBI:78442"/>
        <dbReference type="ChEBI" id="CHEBI:78532"/>
        <dbReference type="ChEBI" id="CHEBI:456215"/>
        <dbReference type="EC" id="6.1.1.15"/>
    </reaction>
</comment>
<comment type="subunit">
    <text evidence="1">Homodimer.</text>
</comment>
<comment type="subcellular location">
    <subcellularLocation>
        <location evidence="1">Cytoplasm</location>
    </subcellularLocation>
</comment>
<comment type="domain">
    <text evidence="1">Consists of three domains: the N-terminal catalytic domain, the editing domain and the C-terminal anticodon-binding domain.</text>
</comment>
<comment type="similarity">
    <text evidence="1">Belongs to the class-II aminoacyl-tRNA synthetase family. ProS type 1 subfamily.</text>
</comment>
<reference key="1">
    <citation type="journal article" date="2010" name="PLoS ONE">
        <title>Genome sequence of Cronobacter sakazakii BAA-894 and comparative genomic hybridization analysis with other Cronobacter species.</title>
        <authorList>
            <person name="Kucerova E."/>
            <person name="Clifton S.W."/>
            <person name="Xia X.Q."/>
            <person name="Long F."/>
            <person name="Porwollik S."/>
            <person name="Fulton L."/>
            <person name="Fronick C."/>
            <person name="Minx P."/>
            <person name="Kyung K."/>
            <person name="Warren W."/>
            <person name="Fulton R."/>
            <person name="Feng D."/>
            <person name="Wollam A."/>
            <person name="Shah N."/>
            <person name="Bhonagiri V."/>
            <person name="Nash W.E."/>
            <person name="Hallsworth-Pepin K."/>
            <person name="Wilson R.K."/>
            <person name="McClelland M."/>
            <person name="Forsythe S.J."/>
        </authorList>
    </citation>
    <scope>NUCLEOTIDE SEQUENCE [LARGE SCALE GENOMIC DNA]</scope>
    <source>
        <strain>ATCC BAA-894</strain>
    </source>
</reference>
<feature type="chain" id="PRO_1000069139" description="Proline--tRNA ligase">
    <location>
        <begin position="1"/>
        <end position="572"/>
    </location>
</feature>